<feature type="chain" id="PRO_0000392611" description="Probable galacturonosyltransferase-like 9">
    <location>
        <begin position="1"/>
        <end position="390"/>
    </location>
</feature>
<feature type="topological domain" description="Cytoplasmic" evidence="2">
    <location>
        <begin position="1"/>
        <end position="10"/>
    </location>
</feature>
<feature type="transmembrane region" description="Helical; Signal-anchor for type II membrane protein" evidence="2">
    <location>
        <begin position="11"/>
        <end position="31"/>
    </location>
</feature>
<feature type="topological domain" description="Lumenal" evidence="2">
    <location>
        <begin position="32"/>
        <end position="390"/>
    </location>
</feature>
<feature type="glycosylation site" description="N-linked (GlcNAc...) asparagine" evidence="2">
    <location>
        <position position="205"/>
    </location>
</feature>
<feature type="glycosylation site" description="N-linked (GlcNAc...) asparagine" evidence="2">
    <location>
        <position position="223"/>
    </location>
</feature>
<reference key="1">
    <citation type="journal article" date="2000" name="Nature">
        <title>Sequence and analysis of chromosome 1 of the plant Arabidopsis thaliana.</title>
        <authorList>
            <person name="Theologis A."/>
            <person name="Ecker J.R."/>
            <person name="Palm C.J."/>
            <person name="Federspiel N.A."/>
            <person name="Kaul S."/>
            <person name="White O."/>
            <person name="Alonso J."/>
            <person name="Altafi H."/>
            <person name="Araujo R."/>
            <person name="Bowman C.L."/>
            <person name="Brooks S.Y."/>
            <person name="Buehler E."/>
            <person name="Chan A."/>
            <person name="Chao Q."/>
            <person name="Chen H."/>
            <person name="Cheuk R.F."/>
            <person name="Chin C.W."/>
            <person name="Chung M.K."/>
            <person name="Conn L."/>
            <person name="Conway A.B."/>
            <person name="Conway A.R."/>
            <person name="Creasy T.H."/>
            <person name="Dewar K."/>
            <person name="Dunn P."/>
            <person name="Etgu P."/>
            <person name="Feldblyum T.V."/>
            <person name="Feng J.-D."/>
            <person name="Fong B."/>
            <person name="Fujii C.Y."/>
            <person name="Gill J.E."/>
            <person name="Goldsmith A.D."/>
            <person name="Haas B."/>
            <person name="Hansen N.F."/>
            <person name="Hughes B."/>
            <person name="Huizar L."/>
            <person name="Hunter J.L."/>
            <person name="Jenkins J."/>
            <person name="Johnson-Hopson C."/>
            <person name="Khan S."/>
            <person name="Khaykin E."/>
            <person name="Kim C.J."/>
            <person name="Koo H.L."/>
            <person name="Kremenetskaia I."/>
            <person name="Kurtz D.B."/>
            <person name="Kwan A."/>
            <person name="Lam B."/>
            <person name="Langin-Hooper S."/>
            <person name="Lee A."/>
            <person name="Lee J.M."/>
            <person name="Lenz C.A."/>
            <person name="Li J.H."/>
            <person name="Li Y.-P."/>
            <person name="Lin X."/>
            <person name="Liu S.X."/>
            <person name="Liu Z.A."/>
            <person name="Luros J.S."/>
            <person name="Maiti R."/>
            <person name="Marziali A."/>
            <person name="Militscher J."/>
            <person name="Miranda M."/>
            <person name="Nguyen M."/>
            <person name="Nierman W.C."/>
            <person name="Osborne B.I."/>
            <person name="Pai G."/>
            <person name="Peterson J."/>
            <person name="Pham P.K."/>
            <person name="Rizzo M."/>
            <person name="Rooney T."/>
            <person name="Rowley D."/>
            <person name="Sakano H."/>
            <person name="Salzberg S.L."/>
            <person name="Schwartz J.R."/>
            <person name="Shinn P."/>
            <person name="Southwick A.M."/>
            <person name="Sun H."/>
            <person name="Tallon L.J."/>
            <person name="Tambunga G."/>
            <person name="Toriumi M.J."/>
            <person name="Town C.D."/>
            <person name="Utterback T."/>
            <person name="Van Aken S."/>
            <person name="Vaysberg M."/>
            <person name="Vysotskaia V.S."/>
            <person name="Walker M."/>
            <person name="Wu D."/>
            <person name="Yu G."/>
            <person name="Fraser C.M."/>
            <person name="Venter J.C."/>
            <person name="Davis R.W."/>
        </authorList>
    </citation>
    <scope>NUCLEOTIDE SEQUENCE [LARGE SCALE GENOMIC DNA]</scope>
    <source>
        <strain>cv. Columbia</strain>
    </source>
</reference>
<reference key="2">
    <citation type="journal article" date="2017" name="Plant J.">
        <title>Araport11: a complete reannotation of the Arabidopsis thaliana reference genome.</title>
        <authorList>
            <person name="Cheng C.Y."/>
            <person name="Krishnakumar V."/>
            <person name="Chan A.P."/>
            <person name="Thibaud-Nissen F."/>
            <person name="Schobel S."/>
            <person name="Town C.D."/>
        </authorList>
    </citation>
    <scope>GENOME REANNOTATION</scope>
    <source>
        <strain>cv. Columbia</strain>
    </source>
</reference>
<reference key="3">
    <citation type="journal article" date="2003" name="Science">
        <title>Empirical analysis of transcriptional activity in the Arabidopsis genome.</title>
        <authorList>
            <person name="Yamada K."/>
            <person name="Lim J."/>
            <person name="Dale J.M."/>
            <person name="Chen H."/>
            <person name="Shinn P."/>
            <person name="Palm C.J."/>
            <person name="Southwick A.M."/>
            <person name="Wu H.C."/>
            <person name="Kim C.J."/>
            <person name="Nguyen M."/>
            <person name="Pham P.K."/>
            <person name="Cheuk R.F."/>
            <person name="Karlin-Newmann G."/>
            <person name="Liu S.X."/>
            <person name="Lam B."/>
            <person name="Sakano H."/>
            <person name="Wu T."/>
            <person name="Yu G."/>
            <person name="Miranda M."/>
            <person name="Quach H.L."/>
            <person name="Tripp M."/>
            <person name="Chang C.H."/>
            <person name="Lee J.M."/>
            <person name="Toriumi M.J."/>
            <person name="Chan M.M."/>
            <person name="Tang C.C."/>
            <person name="Onodera C.S."/>
            <person name="Deng J.M."/>
            <person name="Akiyama K."/>
            <person name="Ansari Y."/>
            <person name="Arakawa T."/>
            <person name="Banh J."/>
            <person name="Banno F."/>
            <person name="Bowser L."/>
            <person name="Brooks S.Y."/>
            <person name="Carninci P."/>
            <person name="Chao Q."/>
            <person name="Choy N."/>
            <person name="Enju A."/>
            <person name="Goldsmith A.D."/>
            <person name="Gurjal M."/>
            <person name="Hansen N.F."/>
            <person name="Hayashizaki Y."/>
            <person name="Johnson-Hopson C."/>
            <person name="Hsuan V.W."/>
            <person name="Iida K."/>
            <person name="Karnes M."/>
            <person name="Khan S."/>
            <person name="Koesema E."/>
            <person name="Ishida J."/>
            <person name="Jiang P.X."/>
            <person name="Jones T."/>
            <person name="Kawai J."/>
            <person name="Kamiya A."/>
            <person name="Meyers C."/>
            <person name="Nakajima M."/>
            <person name="Narusaka M."/>
            <person name="Seki M."/>
            <person name="Sakurai T."/>
            <person name="Satou M."/>
            <person name="Tamse R."/>
            <person name="Vaysberg M."/>
            <person name="Wallender E.K."/>
            <person name="Wong C."/>
            <person name="Yamamura Y."/>
            <person name="Yuan S."/>
            <person name="Shinozaki K."/>
            <person name="Davis R.W."/>
            <person name="Theologis A."/>
            <person name="Ecker J.R."/>
        </authorList>
    </citation>
    <scope>NUCLEOTIDE SEQUENCE [LARGE SCALE MRNA]</scope>
    <source>
        <strain>cv. Columbia</strain>
    </source>
</reference>
<reference key="4">
    <citation type="journal article" date="2000" name="Plant Mol. Biol.">
        <title>Organization and structural evolution of four multigene families in Arabidopsis thaliana: AtLCAD, AtLGT, AtMYST and AtHD-GL2.</title>
        <authorList>
            <person name="Tavares R."/>
            <person name="Aubourg S."/>
            <person name="Lecharny A."/>
            <person name="Kreis M."/>
        </authorList>
    </citation>
    <scope>GENE FAMILY</scope>
    <scope>NOMENCLATURE</scope>
</reference>
<reference key="5">
    <citation type="journal article" date="2006" name="Proc. Natl. Acad. Sci. U.S.A.">
        <title>Functional identification of an Arabidopsis pectin biosynthetic homogalacturonan galacturonosyltransferase.</title>
        <authorList>
            <person name="Sterling J.D."/>
            <person name="Atmodjo M.A."/>
            <person name="Inwood S.E."/>
            <person name="Kumar Kolli V.S."/>
            <person name="Quigley H.F."/>
            <person name="Hahn M.G."/>
            <person name="Mohnen D."/>
        </authorList>
    </citation>
    <scope>GENE FAMILY</scope>
    <scope>NOMENCLATURE</scope>
</reference>
<protein>
    <recommendedName>
        <fullName>Probable galacturonosyltransferase-like 9</fullName>
        <ecNumber>2.4.1.-</ecNumber>
    </recommendedName>
    <alternativeName>
        <fullName>Like glycosyl transferase 8</fullName>
    </alternativeName>
</protein>
<proteinExistence type="evidence at transcript level"/>
<sequence length="390" mass="44259">MRLRFPMKSAVLAFAIFLVFIPLFSVGIRMIPGRLTAVSATVGNGFDLGSFVEAPEYRNGKECVSQSLNRENFVSSCDASLVHVAMTLDSEYLRGSIAAVHSMLRHASCPENVFFHLIAAEFDPASPRVLSQLVRSTFPSLNFKVYIFREDTVINLISSSIRQALENPLNYARNYLGDILDPCVDRVIYLDSDIIVVDDITKLWNTSLTGSRIIGAPEYCHANFTKYFTSGFWSDPALPGFFSGRKPCYFNTGVMVMDLVRWREGNYREKLETWMQIQKKKRIYDLGSLPPFLLVFAGNVEAIDHRWNQHGLGGDNVRGSCRSLHKGPVSLLHWSGKGKPWVRLDEKRPCPLDHLWEPYDLYEHKIERAKDQSLFGFSSLSELTEDSSFF</sequence>
<accession>O04536</accession>
<organism>
    <name type="scientific">Arabidopsis thaliana</name>
    <name type="common">Mouse-ear cress</name>
    <dbReference type="NCBI Taxonomy" id="3702"/>
    <lineage>
        <taxon>Eukaryota</taxon>
        <taxon>Viridiplantae</taxon>
        <taxon>Streptophyta</taxon>
        <taxon>Embryophyta</taxon>
        <taxon>Tracheophyta</taxon>
        <taxon>Spermatophyta</taxon>
        <taxon>Magnoliopsida</taxon>
        <taxon>eudicotyledons</taxon>
        <taxon>Gunneridae</taxon>
        <taxon>Pentapetalae</taxon>
        <taxon>rosids</taxon>
        <taxon>malvids</taxon>
        <taxon>Brassicales</taxon>
        <taxon>Brassicaceae</taxon>
        <taxon>Camelineae</taxon>
        <taxon>Arabidopsis</taxon>
    </lineage>
</organism>
<name>GATL9_ARATH</name>
<comment type="function">
    <text evidence="1">May be involved in pectin and/or xylans biosynthesis in cell walls.</text>
</comment>
<comment type="pathway">
    <text>Glycan metabolism; pectin biosynthesis.</text>
</comment>
<comment type="subcellular location">
    <subcellularLocation>
        <location evidence="1">Golgi apparatus membrane</location>
        <topology evidence="1">Single-pass type II membrane protein</topology>
    </subcellularLocation>
</comment>
<comment type="similarity">
    <text evidence="3">Belongs to the glycosyltransferase 8 family.</text>
</comment>
<keyword id="KW-0961">Cell wall biogenesis/degradation</keyword>
<keyword id="KW-0325">Glycoprotein</keyword>
<keyword id="KW-0328">Glycosyltransferase</keyword>
<keyword id="KW-0333">Golgi apparatus</keyword>
<keyword id="KW-0472">Membrane</keyword>
<keyword id="KW-1185">Reference proteome</keyword>
<keyword id="KW-0735">Signal-anchor</keyword>
<keyword id="KW-0808">Transferase</keyword>
<keyword id="KW-0812">Transmembrane</keyword>
<keyword id="KW-1133">Transmembrane helix</keyword>
<dbReference type="EC" id="2.4.1.-"/>
<dbReference type="EMBL" id="AC002062">
    <property type="protein sequence ID" value="AAB61117.1"/>
    <property type="molecule type" value="Genomic_DNA"/>
</dbReference>
<dbReference type="EMBL" id="CP002684">
    <property type="protein sequence ID" value="AEE35015.1"/>
    <property type="molecule type" value="Genomic_DNA"/>
</dbReference>
<dbReference type="EMBL" id="CP002684">
    <property type="protein sequence ID" value="AEE35016.1"/>
    <property type="molecule type" value="Genomic_DNA"/>
</dbReference>
<dbReference type="EMBL" id="AF370264">
    <property type="protein sequence ID" value="AAK44079.1"/>
    <property type="molecule type" value="mRNA"/>
</dbReference>
<dbReference type="EMBL" id="AY063081">
    <property type="protein sequence ID" value="AAL34255.1"/>
    <property type="molecule type" value="mRNA"/>
</dbReference>
<dbReference type="PIR" id="F96723">
    <property type="entry name" value="F96723"/>
</dbReference>
<dbReference type="RefSeq" id="NP_001117576.1">
    <property type="nucleotide sequence ID" value="NM_001124104.1"/>
</dbReference>
<dbReference type="RefSeq" id="NP_564983.1">
    <property type="nucleotide sequence ID" value="NM_105677.3"/>
</dbReference>
<dbReference type="SMR" id="O04536"/>
<dbReference type="FunCoup" id="O04536">
    <property type="interactions" value="724"/>
</dbReference>
<dbReference type="STRING" id="3702.O04536"/>
<dbReference type="CAZy" id="GT8">
    <property type="family name" value="Glycosyltransferase Family 8"/>
</dbReference>
<dbReference type="GlyCosmos" id="O04536">
    <property type="glycosylation" value="2 sites, No reported glycans"/>
</dbReference>
<dbReference type="GlyGen" id="O04536">
    <property type="glycosylation" value="2 sites"/>
</dbReference>
<dbReference type="PaxDb" id="3702-AT1G70090.1"/>
<dbReference type="ProteomicsDB" id="230486"/>
<dbReference type="EnsemblPlants" id="AT1G70090.1">
    <property type="protein sequence ID" value="AT1G70090.1"/>
    <property type="gene ID" value="AT1G70090"/>
</dbReference>
<dbReference type="EnsemblPlants" id="AT1G70090.2">
    <property type="protein sequence ID" value="AT1G70090.2"/>
    <property type="gene ID" value="AT1G70090"/>
</dbReference>
<dbReference type="GeneID" id="843345"/>
<dbReference type="Gramene" id="AT1G70090.1">
    <property type="protein sequence ID" value="AT1G70090.1"/>
    <property type="gene ID" value="AT1G70090"/>
</dbReference>
<dbReference type="Gramene" id="AT1G70090.2">
    <property type="protein sequence ID" value="AT1G70090.2"/>
    <property type="gene ID" value="AT1G70090"/>
</dbReference>
<dbReference type="KEGG" id="ath:AT1G70090"/>
<dbReference type="Araport" id="AT1G70090"/>
<dbReference type="TAIR" id="AT1G70090">
    <property type="gene designation" value="LGT8"/>
</dbReference>
<dbReference type="eggNOG" id="ENOG502QTN8">
    <property type="taxonomic scope" value="Eukaryota"/>
</dbReference>
<dbReference type="HOGENOM" id="CLU_034713_0_0_1"/>
<dbReference type="InParanoid" id="O04536"/>
<dbReference type="OMA" id="HKLWNIS"/>
<dbReference type="PhylomeDB" id="O04536"/>
<dbReference type="UniPathway" id="UPA00845"/>
<dbReference type="PRO" id="PR:O04536"/>
<dbReference type="Proteomes" id="UP000006548">
    <property type="component" value="Chromosome 1"/>
</dbReference>
<dbReference type="ExpressionAtlas" id="O04536">
    <property type="expression patterns" value="baseline and differential"/>
</dbReference>
<dbReference type="GO" id="GO:0005794">
    <property type="term" value="C:Golgi apparatus"/>
    <property type="evidence" value="ECO:0000314"/>
    <property type="project" value="TAIR"/>
</dbReference>
<dbReference type="GO" id="GO:0000139">
    <property type="term" value="C:Golgi membrane"/>
    <property type="evidence" value="ECO:0007669"/>
    <property type="project" value="UniProtKB-SubCell"/>
</dbReference>
<dbReference type="GO" id="GO:0047262">
    <property type="term" value="F:polygalacturonate 4-alpha-galacturonosyltransferase activity"/>
    <property type="evidence" value="ECO:0000250"/>
    <property type="project" value="TAIR"/>
</dbReference>
<dbReference type="GO" id="GO:0071555">
    <property type="term" value="P:cell wall organization"/>
    <property type="evidence" value="ECO:0007669"/>
    <property type="project" value="UniProtKB-KW"/>
</dbReference>
<dbReference type="GO" id="GO:0045489">
    <property type="term" value="P:pectin biosynthetic process"/>
    <property type="evidence" value="ECO:0007669"/>
    <property type="project" value="UniProtKB-UniPathway"/>
</dbReference>
<dbReference type="FunFam" id="3.90.550.10:FF:000024">
    <property type="entry name" value="Hexosyltransferase"/>
    <property type="match status" value="1"/>
</dbReference>
<dbReference type="Gene3D" id="3.90.550.10">
    <property type="entry name" value="Spore Coat Polysaccharide Biosynthesis Protein SpsA, Chain A"/>
    <property type="match status" value="1"/>
</dbReference>
<dbReference type="InterPro" id="IPR002495">
    <property type="entry name" value="Glyco_trans_8"/>
</dbReference>
<dbReference type="InterPro" id="IPR050748">
    <property type="entry name" value="Glycosyltrans_8_dom-fam"/>
</dbReference>
<dbReference type="InterPro" id="IPR029044">
    <property type="entry name" value="Nucleotide-diphossugar_trans"/>
</dbReference>
<dbReference type="PANTHER" id="PTHR13778:SF40">
    <property type="entry name" value="GALACTURONOSYLTRANSFERASE-LIKE 9-RELATED"/>
    <property type="match status" value="1"/>
</dbReference>
<dbReference type="PANTHER" id="PTHR13778">
    <property type="entry name" value="GLYCOSYLTRANSFERASE 8 DOMAIN-CONTAINING PROTEIN"/>
    <property type="match status" value="1"/>
</dbReference>
<dbReference type="Pfam" id="PF01501">
    <property type="entry name" value="Glyco_transf_8"/>
    <property type="match status" value="1"/>
</dbReference>
<dbReference type="SUPFAM" id="SSF53448">
    <property type="entry name" value="Nucleotide-diphospho-sugar transferases"/>
    <property type="match status" value="1"/>
</dbReference>
<evidence type="ECO:0000250" key="1"/>
<evidence type="ECO:0000255" key="2"/>
<evidence type="ECO:0000305" key="3"/>
<gene>
    <name type="primary">GATL9</name>
    <name type="synonym">LGT8</name>
    <name type="ordered locus">At1g70090</name>
    <name type="ORF">F20P5.18</name>
</gene>